<evidence type="ECO:0000255" key="1">
    <source>
        <dbReference type="HAMAP-Rule" id="MF_01008"/>
    </source>
</evidence>
<evidence type="ECO:0000255" key="2">
    <source>
        <dbReference type="PROSITE-ProRule" id="PRU01076"/>
    </source>
</evidence>
<comment type="subunit">
    <text evidence="1">Forms oligomers.</text>
</comment>
<comment type="subcellular location">
    <subcellularLocation>
        <location evidence="1">Cytoplasm</location>
        <location evidence="1">Nucleoid</location>
    </subcellularLocation>
</comment>
<comment type="similarity">
    <text evidence="1">Belongs to the MraZ family.</text>
</comment>
<accession>Q9A594</accession>
<accession>Q9RQJ7</accession>
<gene>
    <name evidence="1" type="primary">mraZ</name>
    <name type="ordered locus">CC_2563</name>
</gene>
<name>MRAZ_CAUVC</name>
<protein>
    <recommendedName>
        <fullName>Transcriptional regulator MraZ</fullName>
    </recommendedName>
</protein>
<feature type="chain" id="PRO_0000108467" description="Transcriptional regulator MraZ">
    <location>
        <begin position="1"/>
        <end position="156"/>
    </location>
</feature>
<feature type="domain" description="SpoVT-AbrB 1" evidence="2">
    <location>
        <begin position="5"/>
        <end position="51"/>
    </location>
</feature>
<feature type="domain" description="SpoVT-AbrB 2" evidence="2">
    <location>
        <begin position="80"/>
        <end position="123"/>
    </location>
</feature>
<reference key="1">
    <citation type="journal article" date="2001" name="Proc. Natl. Acad. Sci. U.S.A.">
        <title>Complete genome sequence of Caulobacter crescentus.</title>
        <authorList>
            <person name="Nierman W.C."/>
            <person name="Feldblyum T.V."/>
            <person name="Laub M.T."/>
            <person name="Paulsen I.T."/>
            <person name="Nelson K.E."/>
            <person name="Eisen J.A."/>
            <person name="Heidelberg J.F."/>
            <person name="Alley M.R.K."/>
            <person name="Ohta N."/>
            <person name="Maddock J.R."/>
            <person name="Potocka I."/>
            <person name="Nelson W.C."/>
            <person name="Newton A."/>
            <person name="Stephens C."/>
            <person name="Phadke N.D."/>
            <person name="Ely B."/>
            <person name="DeBoy R.T."/>
            <person name="Dodson R.J."/>
            <person name="Durkin A.S."/>
            <person name="Gwinn M.L."/>
            <person name="Haft D.H."/>
            <person name="Kolonay J.F."/>
            <person name="Smit J."/>
            <person name="Craven M.B."/>
            <person name="Khouri H.M."/>
            <person name="Shetty J."/>
            <person name="Berry K.J."/>
            <person name="Utterback T.R."/>
            <person name="Tran K."/>
            <person name="Wolf A.M."/>
            <person name="Vamathevan J.J."/>
            <person name="Ermolaeva M.D."/>
            <person name="White O."/>
            <person name="Salzberg S.L."/>
            <person name="Venter J.C."/>
            <person name="Shapiro L."/>
            <person name="Fraser C.M."/>
        </authorList>
    </citation>
    <scope>NUCLEOTIDE SEQUENCE [LARGE SCALE GENOMIC DNA]</scope>
    <source>
        <strain>ATCC 19089 / CIP 103742 / CB 15</strain>
    </source>
</reference>
<reference key="2">
    <citation type="submission" date="1998-10" db="EMBL/GenBank/DDBJ databases">
        <title>The divA gene product, penicillin binding protein B, is required for the initiation step of cell division in Caulobacter.</title>
        <authorList>
            <person name="Ohta N."/>
            <person name="Newton A."/>
        </authorList>
    </citation>
    <scope>NUCLEOTIDE SEQUENCE [GENOMIC DNA] OF 21-156</scope>
    <source>
        <strain>ATCC 19089 / CIP 103742 / CB 15</strain>
    </source>
</reference>
<organism>
    <name type="scientific">Caulobacter vibrioides (strain ATCC 19089 / CIP 103742 / CB 15)</name>
    <name type="common">Caulobacter crescentus</name>
    <dbReference type="NCBI Taxonomy" id="190650"/>
    <lineage>
        <taxon>Bacteria</taxon>
        <taxon>Pseudomonadati</taxon>
        <taxon>Pseudomonadota</taxon>
        <taxon>Alphaproteobacteria</taxon>
        <taxon>Caulobacterales</taxon>
        <taxon>Caulobacteraceae</taxon>
        <taxon>Caulobacter</taxon>
    </lineage>
</organism>
<sequence>MFLSTFEKQLDSKRRIVVPQEFRAAVSGPFDGIFCFPSIEADCLEAGGKALFDRYQAVIEEMPFGDPTRTALETSILGGMAKLTFDTAGRITLPDHLCDMFGLTDSVAVVGMGERFQIWSREAFQAHRAQQRDLAREGLAALRAQQRAAKFAGGAA</sequence>
<proteinExistence type="inferred from homology"/>
<dbReference type="EMBL" id="AE005673">
    <property type="protein sequence ID" value="AAK24533.1"/>
    <property type="molecule type" value="Genomic_DNA"/>
</dbReference>
<dbReference type="EMBL" id="AF099190">
    <property type="protein sequence ID" value="AAF06833.1"/>
    <property type="molecule type" value="Genomic_DNA"/>
</dbReference>
<dbReference type="PIR" id="A87567">
    <property type="entry name" value="A87567"/>
</dbReference>
<dbReference type="RefSeq" id="NP_421365.1">
    <property type="nucleotide sequence ID" value="NC_002696.2"/>
</dbReference>
<dbReference type="RefSeq" id="WP_010920419.1">
    <property type="nucleotide sequence ID" value="NC_002696.2"/>
</dbReference>
<dbReference type="SMR" id="Q9A594"/>
<dbReference type="STRING" id="190650.CC_2563"/>
<dbReference type="EnsemblBacteria" id="AAK24533">
    <property type="protein sequence ID" value="AAK24533"/>
    <property type="gene ID" value="CC_2563"/>
</dbReference>
<dbReference type="KEGG" id="ccr:CC_2563"/>
<dbReference type="PATRIC" id="fig|190650.5.peg.2577"/>
<dbReference type="eggNOG" id="COG2001">
    <property type="taxonomic scope" value="Bacteria"/>
</dbReference>
<dbReference type="HOGENOM" id="CLU_107907_1_0_5"/>
<dbReference type="BioCyc" id="CAULO:CC2563-MONOMER"/>
<dbReference type="Proteomes" id="UP000001816">
    <property type="component" value="Chromosome"/>
</dbReference>
<dbReference type="GO" id="GO:0005737">
    <property type="term" value="C:cytoplasm"/>
    <property type="evidence" value="ECO:0007669"/>
    <property type="project" value="UniProtKB-UniRule"/>
</dbReference>
<dbReference type="GO" id="GO:0009295">
    <property type="term" value="C:nucleoid"/>
    <property type="evidence" value="ECO:0007669"/>
    <property type="project" value="UniProtKB-SubCell"/>
</dbReference>
<dbReference type="GO" id="GO:0003700">
    <property type="term" value="F:DNA-binding transcription factor activity"/>
    <property type="evidence" value="ECO:0007669"/>
    <property type="project" value="UniProtKB-UniRule"/>
</dbReference>
<dbReference type="GO" id="GO:0000976">
    <property type="term" value="F:transcription cis-regulatory region binding"/>
    <property type="evidence" value="ECO:0007669"/>
    <property type="project" value="TreeGrafter"/>
</dbReference>
<dbReference type="GO" id="GO:2000143">
    <property type="term" value="P:negative regulation of DNA-templated transcription initiation"/>
    <property type="evidence" value="ECO:0007669"/>
    <property type="project" value="TreeGrafter"/>
</dbReference>
<dbReference type="CDD" id="cd16321">
    <property type="entry name" value="MraZ_C"/>
    <property type="match status" value="1"/>
</dbReference>
<dbReference type="CDD" id="cd16320">
    <property type="entry name" value="MraZ_N"/>
    <property type="match status" value="1"/>
</dbReference>
<dbReference type="Gene3D" id="3.40.1550.20">
    <property type="entry name" value="Transcriptional regulator MraZ domain"/>
    <property type="match status" value="1"/>
</dbReference>
<dbReference type="HAMAP" id="MF_01008">
    <property type="entry name" value="MraZ"/>
    <property type="match status" value="1"/>
</dbReference>
<dbReference type="InterPro" id="IPR003444">
    <property type="entry name" value="MraZ"/>
</dbReference>
<dbReference type="InterPro" id="IPR035644">
    <property type="entry name" value="MraZ_C"/>
</dbReference>
<dbReference type="InterPro" id="IPR020603">
    <property type="entry name" value="MraZ_dom"/>
</dbReference>
<dbReference type="InterPro" id="IPR035642">
    <property type="entry name" value="MraZ_N"/>
</dbReference>
<dbReference type="InterPro" id="IPR038619">
    <property type="entry name" value="MraZ_sf"/>
</dbReference>
<dbReference type="InterPro" id="IPR007159">
    <property type="entry name" value="SpoVT-AbrB_dom"/>
</dbReference>
<dbReference type="InterPro" id="IPR037914">
    <property type="entry name" value="SpoVT-AbrB_sf"/>
</dbReference>
<dbReference type="PANTHER" id="PTHR34701">
    <property type="entry name" value="TRANSCRIPTIONAL REGULATOR MRAZ"/>
    <property type="match status" value="1"/>
</dbReference>
<dbReference type="PANTHER" id="PTHR34701:SF1">
    <property type="entry name" value="TRANSCRIPTIONAL REGULATOR MRAZ"/>
    <property type="match status" value="1"/>
</dbReference>
<dbReference type="Pfam" id="PF02381">
    <property type="entry name" value="MraZ"/>
    <property type="match status" value="2"/>
</dbReference>
<dbReference type="SUPFAM" id="SSF89447">
    <property type="entry name" value="AbrB/MazE/MraZ-like"/>
    <property type="match status" value="1"/>
</dbReference>
<dbReference type="PROSITE" id="PS51740">
    <property type="entry name" value="SPOVT_ABRB"/>
    <property type="match status" value="2"/>
</dbReference>
<keyword id="KW-0963">Cytoplasm</keyword>
<keyword id="KW-0238">DNA-binding</keyword>
<keyword id="KW-1185">Reference proteome</keyword>
<keyword id="KW-0677">Repeat</keyword>
<keyword id="KW-0804">Transcription</keyword>
<keyword id="KW-0805">Transcription regulation</keyword>